<evidence type="ECO:0000255" key="1">
    <source>
        <dbReference type="HAMAP-Rule" id="MF_01318"/>
    </source>
</evidence>
<evidence type="ECO:0000305" key="2"/>
<keyword id="KW-0678">Repressor</keyword>
<keyword id="KW-0687">Ribonucleoprotein</keyword>
<keyword id="KW-0689">Ribosomal protein</keyword>
<keyword id="KW-0694">RNA-binding</keyword>
<keyword id="KW-0699">rRNA-binding</keyword>
<keyword id="KW-0810">Translation regulation</keyword>
<keyword id="KW-0820">tRNA-binding</keyword>
<accession>Q0BJ57</accession>
<protein>
    <recommendedName>
        <fullName evidence="1">Large ribosomal subunit protein uL1</fullName>
    </recommendedName>
    <alternativeName>
        <fullName evidence="2">50S ribosomal protein L1</fullName>
    </alternativeName>
</protein>
<reference key="1">
    <citation type="submission" date="2006-08" db="EMBL/GenBank/DDBJ databases">
        <title>Complete sequence of chromosome 1 of Burkholderia cepacia AMMD.</title>
        <authorList>
            <person name="Copeland A."/>
            <person name="Lucas S."/>
            <person name="Lapidus A."/>
            <person name="Barry K."/>
            <person name="Detter J.C."/>
            <person name="Glavina del Rio T."/>
            <person name="Hammon N."/>
            <person name="Israni S."/>
            <person name="Pitluck S."/>
            <person name="Bruce D."/>
            <person name="Chain P."/>
            <person name="Malfatti S."/>
            <person name="Shin M."/>
            <person name="Vergez L."/>
            <person name="Schmutz J."/>
            <person name="Larimer F."/>
            <person name="Land M."/>
            <person name="Hauser L."/>
            <person name="Kyrpides N."/>
            <person name="Kim E."/>
            <person name="Parke J."/>
            <person name="Coenye T."/>
            <person name="Konstantinidis K."/>
            <person name="Ramette A."/>
            <person name="Tiedje J."/>
            <person name="Richardson P."/>
        </authorList>
    </citation>
    <scope>NUCLEOTIDE SEQUENCE [LARGE SCALE GENOMIC DNA]</scope>
    <source>
        <strain>ATCC BAA-244 / DSM 16087 / CCUG 44356 / LMG 19182 / AMMD</strain>
    </source>
</reference>
<proteinExistence type="inferred from homology"/>
<organism>
    <name type="scientific">Burkholderia ambifaria (strain ATCC BAA-244 / DSM 16087 / CCUG 44356 / LMG 19182 / AMMD)</name>
    <name type="common">Burkholderia cepacia (strain AMMD)</name>
    <dbReference type="NCBI Taxonomy" id="339670"/>
    <lineage>
        <taxon>Bacteria</taxon>
        <taxon>Pseudomonadati</taxon>
        <taxon>Pseudomonadota</taxon>
        <taxon>Betaproteobacteria</taxon>
        <taxon>Burkholderiales</taxon>
        <taxon>Burkholderiaceae</taxon>
        <taxon>Burkholderia</taxon>
        <taxon>Burkholderia cepacia complex</taxon>
    </lineage>
</organism>
<comment type="function">
    <text evidence="1">Binds directly to 23S rRNA. The L1 stalk is quite mobile in the ribosome, and is involved in E site tRNA release.</text>
</comment>
<comment type="function">
    <text evidence="1">Protein L1 is also a translational repressor protein, it controls the translation of the L11 operon by binding to its mRNA.</text>
</comment>
<comment type="subunit">
    <text evidence="1">Part of the 50S ribosomal subunit.</text>
</comment>
<comment type="similarity">
    <text evidence="1">Belongs to the universal ribosomal protein uL1 family.</text>
</comment>
<sequence>MAKISKRRQAFAAKVDRQKLYAIEDALALVKECASAKFDESIDVAVQLGIDAKKSDQVVRGSVVLPAGTGKSVRVAVFAQGEKAEQARAAGAEIVGMEDLAEQIKAGQMDFDIVIASPDTMRIVGTLGQILGPRGLMPNPKVGTVTPDVATAVKNAKAGQVQFRVDKAGIIHATIGRASFEAAALRSNLSALIEALQKAKPATSKGVYLRKVALSSTMGVGLRVDQATLAAQ</sequence>
<name>RL1_BURCM</name>
<gene>
    <name evidence="1" type="primary">rplA</name>
    <name type="ordered locus">Bamb_0256</name>
</gene>
<dbReference type="EMBL" id="CP000440">
    <property type="protein sequence ID" value="ABI85816.1"/>
    <property type="molecule type" value="Genomic_DNA"/>
</dbReference>
<dbReference type="RefSeq" id="WP_006759673.1">
    <property type="nucleotide sequence ID" value="NZ_CP009798.1"/>
</dbReference>
<dbReference type="SMR" id="Q0BJ57"/>
<dbReference type="GeneID" id="93084329"/>
<dbReference type="KEGG" id="bam:Bamb_0256"/>
<dbReference type="PATRIC" id="fig|339670.21.peg.1364"/>
<dbReference type="eggNOG" id="COG0081">
    <property type="taxonomic scope" value="Bacteria"/>
</dbReference>
<dbReference type="Proteomes" id="UP000000662">
    <property type="component" value="Chromosome 1"/>
</dbReference>
<dbReference type="GO" id="GO:0022625">
    <property type="term" value="C:cytosolic large ribosomal subunit"/>
    <property type="evidence" value="ECO:0007669"/>
    <property type="project" value="TreeGrafter"/>
</dbReference>
<dbReference type="GO" id="GO:0019843">
    <property type="term" value="F:rRNA binding"/>
    <property type="evidence" value="ECO:0007669"/>
    <property type="project" value="UniProtKB-UniRule"/>
</dbReference>
<dbReference type="GO" id="GO:0003735">
    <property type="term" value="F:structural constituent of ribosome"/>
    <property type="evidence" value="ECO:0007669"/>
    <property type="project" value="InterPro"/>
</dbReference>
<dbReference type="GO" id="GO:0000049">
    <property type="term" value="F:tRNA binding"/>
    <property type="evidence" value="ECO:0007669"/>
    <property type="project" value="UniProtKB-KW"/>
</dbReference>
<dbReference type="GO" id="GO:0006417">
    <property type="term" value="P:regulation of translation"/>
    <property type="evidence" value="ECO:0007669"/>
    <property type="project" value="UniProtKB-KW"/>
</dbReference>
<dbReference type="GO" id="GO:0006412">
    <property type="term" value="P:translation"/>
    <property type="evidence" value="ECO:0007669"/>
    <property type="project" value="UniProtKB-UniRule"/>
</dbReference>
<dbReference type="CDD" id="cd00403">
    <property type="entry name" value="Ribosomal_L1"/>
    <property type="match status" value="1"/>
</dbReference>
<dbReference type="FunFam" id="3.40.50.790:FF:000001">
    <property type="entry name" value="50S ribosomal protein L1"/>
    <property type="match status" value="1"/>
</dbReference>
<dbReference type="Gene3D" id="3.30.190.20">
    <property type="match status" value="1"/>
</dbReference>
<dbReference type="Gene3D" id="3.40.50.790">
    <property type="match status" value="1"/>
</dbReference>
<dbReference type="HAMAP" id="MF_01318_B">
    <property type="entry name" value="Ribosomal_uL1_B"/>
    <property type="match status" value="1"/>
</dbReference>
<dbReference type="InterPro" id="IPR005878">
    <property type="entry name" value="Ribosom_uL1_bac-type"/>
</dbReference>
<dbReference type="InterPro" id="IPR002143">
    <property type="entry name" value="Ribosomal_uL1"/>
</dbReference>
<dbReference type="InterPro" id="IPR023674">
    <property type="entry name" value="Ribosomal_uL1-like"/>
</dbReference>
<dbReference type="InterPro" id="IPR028364">
    <property type="entry name" value="Ribosomal_uL1/biogenesis"/>
</dbReference>
<dbReference type="InterPro" id="IPR016095">
    <property type="entry name" value="Ribosomal_uL1_3-a/b-sand"/>
</dbReference>
<dbReference type="InterPro" id="IPR023673">
    <property type="entry name" value="Ribosomal_uL1_CS"/>
</dbReference>
<dbReference type="NCBIfam" id="TIGR01169">
    <property type="entry name" value="rplA_bact"/>
    <property type="match status" value="1"/>
</dbReference>
<dbReference type="PANTHER" id="PTHR36427">
    <property type="entry name" value="54S RIBOSOMAL PROTEIN L1, MITOCHONDRIAL"/>
    <property type="match status" value="1"/>
</dbReference>
<dbReference type="PANTHER" id="PTHR36427:SF3">
    <property type="entry name" value="LARGE RIBOSOMAL SUBUNIT PROTEIN UL1M"/>
    <property type="match status" value="1"/>
</dbReference>
<dbReference type="Pfam" id="PF00687">
    <property type="entry name" value="Ribosomal_L1"/>
    <property type="match status" value="1"/>
</dbReference>
<dbReference type="PIRSF" id="PIRSF002155">
    <property type="entry name" value="Ribosomal_L1"/>
    <property type="match status" value="1"/>
</dbReference>
<dbReference type="SUPFAM" id="SSF56808">
    <property type="entry name" value="Ribosomal protein L1"/>
    <property type="match status" value="1"/>
</dbReference>
<dbReference type="PROSITE" id="PS01199">
    <property type="entry name" value="RIBOSOMAL_L1"/>
    <property type="match status" value="1"/>
</dbReference>
<feature type="chain" id="PRO_0000307973" description="Large ribosomal subunit protein uL1">
    <location>
        <begin position="1"/>
        <end position="232"/>
    </location>
</feature>